<dbReference type="EC" id="2.5.1.39" evidence="1"/>
<dbReference type="EMBL" id="CP000947">
    <property type="protein sequence ID" value="ACA31876.1"/>
    <property type="molecule type" value="Genomic_DNA"/>
</dbReference>
<dbReference type="RefSeq" id="WP_012341121.1">
    <property type="nucleotide sequence ID" value="NC_010519.1"/>
</dbReference>
<dbReference type="SMR" id="B0UUY3"/>
<dbReference type="STRING" id="228400.HSM_0025"/>
<dbReference type="GeneID" id="31486300"/>
<dbReference type="KEGG" id="hsm:HSM_0025"/>
<dbReference type="HOGENOM" id="CLU_034879_1_0_6"/>
<dbReference type="UniPathway" id="UPA00232"/>
<dbReference type="GO" id="GO:0005886">
    <property type="term" value="C:plasma membrane"/>
    <property type="evidence" value="ECO:0007669"/>
    <property type="project" value="UniProtKB-SubCell"/>
</dbReference>
<dbReference type="GO" id="GO:0008412">
    <property type="term" value="F:4-hydroxybenzoate polyprenyltransferase activity"/>
    <property type="evidence" value="ECO:0007669"/>
    <property type="project" value="UniProtKB-UniRule"/>
</dbReference>
<dbReference type="GO" id="GO:0006744">
    <property type="term" value="P:ubiquinone biosynthetic process"/>
    <property type="evidence" value="ECO:0007669"/>
    <property type="project" value="UniProtKB-UniRule"/>
</dbReference>
<dbReference type="CDD" id="cd13959">
    <property type="entry name" value="PT_UbiA_COQ2"/>
    <property type="match status" value="1"/>
</dbReference>
<dbReference type="FunFam" id="1.10.357.140:FF:000002">
    <property type="entry name" value="4-hydroxybenzoate octaprenyltransferase"/>
    <property type="match status" value="1"/>
</dbReference>
<dbReference type="FunFam" id="1.20.120.1780:FF:000001">
    <property type="entry name" value="4-hydroxybenzoate octaprenyltransferase"/>
    <property type="match status" value="1"/>
</dbReference>
<dbReference type="Gene3D" id="1.10.357.140">
    <property type="entry name" value="UbiA prenyltransferase"/>
    <property type="match status" value="1"/>
</dbReference>
<dbReference type="Gene3D" id="1.20.120.1780">
    <property type="entry name" value="UbiA prenyltransferase"/>
    <property type="match status" value="1"/>
</dbReference>
<dbReference type="HAMAP" id="MF_01635">
    <property type="entry name" value="UbiA"/>
    <property type="match status" value="1"/>
</dbReference>
<dbReference type="InterPro" id="IPR006370">
    <property type="entry name" value="HB_polyprenyltransferase-like"/>
</dbReference>
<dbReference type="InterPro" id="IPR039653">
    <property type="entry name" value="Prenyltransferase"/>
</dbReference>
<dbReference type="InterPro" id="IPR000537">
    <property type="entry name" value="UbiA_prenyltransferase"/>
</dbReference>
<dbReference type="InterPro" id="IPR030470">
    <property type="entry name" value="UbiA_prenylTrfase_CS"/>
</dbReference>
<dbReference type="InterPro" id="IPR044878">
    <property type="entry name" value="UbiA_sf"/>
</dbReference>
<dbReference type="NCBIfam" id="TIGR01474">
    <property type="entry name" value="ubiA_proteo"/>
    <property type="match status" value="1"/>
</dbReference>
<dbReference type="PANTHER" id="PTHR11048:SF28">
    <property type="entry name" value="4-HYDROXYBENZOATE POLYPRENYLTRANSFERASE, MITOCHONDRIAL"/>
    <property type="match status" value="1"/>
</dbReference>
<dbReference type="PANTHER" id="PTHR11048">
    <property type="entry name" value="PRENYLTRANSFERASES"/>
    <property type="match status" value="1"/>
</dbReference>
<dbReference type="Pfam" id="PF01040">
    <property type="entry name" value="UbiA"/>
    <property type="match status" value="1"/>
</dbReference>
<dbReference type="PROSITE" id="PS00943">
    <property type="entry name" value="UBIA"/>
    <property type="match status" value="1"/>
</dbReference>
<accession>B0UUY3</accession>
<evidence type="ECO:0000255" key="1">
    <source>
        <dbReference type="HAMAP-Rule" id="MF_01635"/>
    </source>
</evidence>
<sequence length="286" mass="32570">MTIFAKDKLIAYGQLMRLDKPIGTLLLLWPTLWALYLAEKAMPTLSVLAIFIFGVFLMRSAGCVINDYADRHIDGKVKRTSLRPLSTGRATPREAKWLFIVLVFCSFLLVLCLNLYTIGLSVIAVILAFIYPFMKRYTHLPQFFLGAAFGWSIPMAYGATIEALPLECWLLFIANLSWTVAYDTQYAMVDRDDDLRIGVKSTAILFAQYDNKIIALLQIITLIFLFSVGYLSQLNNRYFIVLAIAGLFFVYQCRLTKNRDRESCFNAFLNNNYFGLTVFIAVLFGI</sequence>
<keyword id="KW-0997">Cell inner membrane</keyword>
<keyword id="KW-1003">Cell membrane</keyword>
<keyword id="KW-0460">Magnesium</keyword>
<keyword id="KW-0472">Membrane</keyword>
<keyword id="KW-0808">Transferase</keyword>
<keyword id="KW-0812">Transmembrane</keyword>
<keyword id="KW-1133">Transmembrane helix</keyword>
<keyword id="KW-0831">Ubiquinone biosynthesis</keyword>
<protein>
    <recommendedName>
        <fullName evidence="1">4-hydroxybenzoate octaprenyltransferase</fullName>
        <ecNumber evidence="1">2.5.1.39</ecNumber>
    </recommendedName>
    <alternativeName>
        <fullName evidence="1">4-HB polyprenyltransferase</fullName>
    </alternativeName>
</protein>
<reference key="1">
    <citation type="submission" date="2008-02" db="EMBL/GenBank/DDBJ databases">
        <title>Complete sequence of Haemophilus somnus 2336.</title>
        <authorList>
            <consortium name="US DOE Joint Genome Institute"/>
            <person name="Siddaramappa S."/>
            <person name="Duncan A.J."/>
            <person name="Challacombe J.F."/>
            <person name="Rainey D."/>
            <person name="Gillaspy A.F."/>
            <person name="Carson M."/>
            <person name="Gipson J."/>
            <person name="Gipson M."/>
            <person name="Bruce D."/>
            <person name="Detter J.C."/>
            <person name="Han C.S."/>
            <person name="Land M."/>
            <person name="Tapia R."/>
            <person name="Thompson L.S."/>
            <person name="Orvis J."/>
            <person name="Zaitshik J."/>
            <person name="Barnes G."/>
            <person name="Brettin T.S."/>
            <person name="Dyer D.W."/>
            <person name="Inzana T.J."/>
        </authorList>
    </citation>
    <scope>NUCLEOTIDE SEQUENCE [LARGE SCALE GENOMIC DNA]</scope>
    <source>
        <strain>2336</strain>
    </source>
</reference>
<name>UBIA_HISS2</name>
<feature type="chain" id="PRO_1000088174" description="4-hydroxybenzoate octaprenyltransferase">
    <location>
        <begin position="1"/>
        <end position="286"/>
    </location>
</feature>
<feature type="transmembrane region" description="Helical" evidence="1">
    <location>
        <begin position="22"/>
        <end position="42"/>
    </location>
</feature>
<feature type="transmembrane region" description="Helical" evidence="1">
    <location>
        <begin position="45"/>
        <end position="65"/>
    </location>
</feature>
<feature type="transmembrane region" description="Helical" evidence="1">
    <location>
        <begin position="98"/>
        <end position="118"/>
    </location>
</feature>
<feature type="transmembrane region" description="Helical" evidence="1">
    <location>
        <begin position="143"/>
        <end position="163"/>
    </location>
</feature>
<feature type="transmembrane region" description="Helical" evidence="1">
    <location>
        <begin position="213"/>
        <end position="233"/>
    </location>
</feature>
<feature type="transmembrane region" description="Helical" evidence="1">
    <location>
        <begin position="238"/>
        <end position="255"/>
    </location>
</feature>
<feature type="transmembrane region" description="Helical" evidence="1">
    <location>
        <begin position="266"/>
        <end position="286"/>
    </location>
</feature>
<proteinExistence type="inferred from homology"/>
<comment type="function">
    <text evidence="1">Catalyzes the prenylation of para-hydroxybenzoate (PHB) with an all-trans polyprenyl group. Mediates the second step in the final reaction sequence of ubiquinone-8 (UQ-8) biosynthesis, which is the condensation of the polyisoprenoid side chain with PHB, generating the first membrane-bound Q intermediate 3-octaprenyl-4-hydroxybenzoate.</text>
</comment>
<comment type="catalytic activity">
    <reaction evidence="1">
        <text>all-trans-octaprenyl diphosphate + 4-hydroxybenzoate = 4-hydroxy-3-(all-trans-octaprenyl)benzoate + diphosphate</text>
        <dbReference type="Rhea" id="RHEA:27782"/>
        <dbReference type="ChEBI" id="CHEBI:1617"/>
        <dbReference type="ChEBI" id="CHEBI:17879"/>
        <dbReference type="ChEBI" id="CHEBI:33019"/>
        <dbReference type="ChEBI" id="CHEBI:57711"/>
        <dbReference type="EC" id="2.5.1.39"/>
    </reaction>
</comment>
<comment type="cofactor">
    <cofactor evidence="1">
        <name>Mg(2+)</name>
        <dbReference type="ChEBI" id="CHEBI:18420"/>
    </cofactor>
</comment>
<comment type="pathway">
    <text evidence="1">Cofactor biosynthesis; ubiquinone biosynthesis.</text>
</comment>
<comment type="subcellular location">
    <subcellularLocation>
        <location evidence="1">Cell inner membrane</location>
        <topology evidence="1">Multi-pass membrane protein</topology>
    </subcellularLocation>
</comment>
<comment type="similarity">
    <text evidence="1">Belongs to the UbiA prenyltransferase family.</text>
</comment>
<organism>
    <name type="scientific">Histophilus somni (strain 2336)</name>
    <name type="common">Haemophilus somnus</name>
    <dbReference type="NCBI Taxonomy" id="228400"/>
    <lineage>
        <taxon>Bacteria</taxon>
        <taxon>Pseudomonadati</taxon>
        <taxon>Pseudomonadota</taxon>
        <taxon>Gammaproteobacteria</taxon>
        <taxon>Pasteurellales</taxon>
        <taxon>Pasteurellaceae</taxon>
        <taxon>Histophilus</taxon>
    </lineage>
</organism>
<gene>
    <name evidence="1" type="primary">ubiA</name>
    <name type="ordered locus">HSM_0025</name>
</gene>